<name>PEPA_URSTH</name>
<accession>P13636</accession>
<feature type="propeptide" id="PRO_0000026044" description="Activation peptide">
    <location>
        <begin position="1"/>
        <end position="45"/>
    </location>
</feature>
<feature type="chain" id="PRO_0000026045" description="Pepsin A">
    <location>
        <begin position="46"/>
        <end position="60" status="greater than"/>
    </location>
</feature>
<feature type="non-terminal residue">
    <location>
        <position position="60"/>
    </location>
</feature>
<sequence>FIIKVPLVKKKSLRKNLKEHGLLKDFLKKHSPNPASKYFPQEAAVMATQPLENYMDMEYF</sequence>
<organism>
    <name type="scientific">Ursus thibetanus</name>
    <name type="common">Asiatic black bear</name>
    <name type="synonym">Selenarctos thibetanus</name>
    <dbReference type="NCBI Taxonomy" id="9642"/>
    <lineage>
        <taxon>Eukaryota</taxon>
        <taxon>Metazoa</taxon>
        <taxon>Chordata</taxon>
        <taxon>Craniata</taxon>
        <taxon>Vertebrata</taxon>
        <taxon>Euteleostomi</taxon>
        <taxon>Mammalia</taxon>
        <taxon>Eutheria</taxon>
        <taxon>Laurasiatheria</taxon>
        <taxon>Carnivora</taxon>
        <taxon>Caniformia</taxon>
        <taxon>Ursidae</taxon>
        <taxon>Ursus</taxon>
    </lineage>
</organism>
<gene>
    <name type="primary">PGA</name>
</gene>
<keyword id="KW-0064">Aspartyl protease</keyword>
<keyword id="KW-0222">Digestion</keyword>
<keyword id="KW-0903">Direct protein sequencing</keyword>
<keyword id="KW-0378">Hydrolase</keyword>
<keyword id="KW-0645">Protease</keyword>
<keyword id="KW-0964">Secreted</keyword>
<keyword id="KW-0865">Zymogen</keyword>
<reference key="1">
    <citation type="journal article" date="1983" name="J. Biochem.">
        <title>Purification and characterization of pepsinogens and pepsins from Asiatic black bear, and amino acid sequence determination of the NH2-terminal 60 residues of the major pepsinogen.</title>
        <authorList>
            <person name="Kageyama T."/>
            <person name="Moriyama A."/>
            <person name="Takahashi K."/>
        </authorList>
    </citation>
    <scope>PROTEIN SEQUENCE</scope>
</reference>
<protein>
    <recommendedName>
        <fullName>Pepsin A</fullName>
        <ecNumber>3.4.23.1</ecNumber>
    </recommendedName>
</protein>
<evidence type="ECO:0000255" key="1">
    <source>
        <dbReference type="PROSITE-ProRule" id="PRU10094"/>
    </source>
</evidence>
<evidence type="ECO:0000305" key="2"/>
<dbReference type="EC" id="3.4.23.1"/>
<dbReference type="PIR" id="A28859">
    <property type="entry name" value="A28859"/>
</dbReference>
<dbReference type="SMR" id="P13636"/>
<dbReference type="MEROPS" id="A01.078"/>
<dbReference type="GO" id="GO:0005576">
    <property type="term" value="C:extracellular region"/>
    <property type="evidence" value="ECO:0007669"/>
    <property type="project" value="UniProtKB-SubCell"/>
</dbReference>
<dbReference type="GO" id="GO:0004190">
    <property type="term" value="F:aspartic-type endopeptidase activity"/>
    <property type="evidence" value="ECO:0007669"/>
    <property type="project" value="UniProtKB-KW"/>
</dbReference>
<dbReference type="GO" id="GO:0007586">
    <property type="term" value="P:digestion"/>
    <property type="evidence" value="ECO:0007669"/>
    <property type="project" value="UniProtKB-KW"/>
</dbReference>
<dbReference type="GO" id="GO:0006508">
    <property type="term" value="P:proteolysis"/>
    <property type="evidence" value="ECO:0007669"/>
    <property type="project" value="UniProtKB-KW"/>
</dbReference>
<dbReference type="Gene3D" id="6.10.140.60">
    <property type="match status" value="1"/>
</dbReference>
<dbReference type="InterPro" id="IPR012848">
    <property type="entry name" value="Aspartic_peptidase_N"/>
</dbReference>
<dbReference type="Pfam" id="PF07966">
    <property type="entry name" value="A1_Propeptide"/>
    <property type="match status" value="1"/>
</dbReference>
<proteinExistence type="evidence at protein level"/>
<comment type="function">
    <text>Shows particularly broad specificity; although bonds involving phenylalanine and leucine are preferred, many others are also cleaved to some extent.</text>
</comment>
<comment type="catalytic activity">
    <reaction evidence="1">
        <text>Preferential cleavage: hydrophobic, preferably aromatic, residues in P1 and P1' positions. Cleaves 1-Phe-|-Val-2, 4-Gln-|-His-5, 13-Glu-|-Ala-14, 14-Ala-|-Leu-15, 15-Leu-|-Tyr-16, 16-Tyr-|-Leu-17, 23-Gly-|-Phe-24, 24-Phe-|-Phe-25 and 25-Phe-|-Tyr-26 bonds in the B chain of insulin.</text>
        <dbReference type="EC" id="3.4.23.1"/>
    </reaction>
</comment>
<comment type="subcellular location">
    <subcellularLocation>
        <location>Secreted</location>
    </subcellularLocation>
</comment>
<comment type="similarity">
    <text evidence="2">Belongs to the peptidase A1 family.</text>
</comment>